<reference key="1">
    <citation type="journal article" date="2009" name="PLoS Genet.">
        <title>Organised genome dynamics in the Escherichia coli species results in highly diverse adaptive paths.</title>
        <authorList>
            <person name="Touchon M."/>
            <person name="Hoede C."/>
            <person name="Tenaillon O."/>
            <person name="Barbe V."/>
            <person name="Baeriswyl S."/>
            <person name="Bidet P."/>
            <person name="Bingen E."/>
            <person name="Bonacorsi S."/>
            <person name="Bouchier C."/>
            <person name="Bouvet O."/>
            <person name="Calteau A."/>
            <person name="Chiapello H."/>
            <person name="Clermont O."/>
            <person name="Cruveiller S."/>
            <person name="Danchin A."/>
            <person name="Diard M."/>
            <person name="Dossat C."/>
            <person name="Karoui M.E."/>
            <person name="Frapy E."/>
            <person name="Garry L."/>
            <person name="Ghigo J.M."/>
            <person name="Gilles A.M."/>
            <person name="Johnson J."/>
            <person name="Le Bouguenec C."/>
            <person name="Lescat M."/>
            <person name="Mangenot S."/>
            <person name="Martinez-Jehanne V."/>
            <person name="Matic I."/>
            <person name="Nassif X."/>
            <person name="Oztas S."/>
            <person name="Petit M.A."/>
            <person name="Pichon C."/>
            <person name="Rouy Z."/>
            <person name="Ruf C.S."/>
            <person name="Schneider D."/>
            <person name="Tourret J."/>
            <person name="Vacherie B."/>
            <person name="Vallenet D."/>
            <person name="Medigue C."/>
            <person name="Rocha E.P.C."/>
            <person name="Denamur E."/>
        </authorList>
    </citation>
    <scope>NUCLEOTIDE SEQUENCE [LARGE SCALE GENOMIC DNA]</scope>
    <source>
        <strain>IAI39 / ExPEC</strain>
    </source>
</reference>
<accession>B7NQY7</accession>
<dbReference type="EMBL" id="CU928164">
    <property type="protein sequence ID" value="CAR20395.1"/>
    <property type="molecule type" value="Genomic_DNA"/>
</dbReference>
<dbReference type="RefSeq" id="WP_001243437.1">
    <property type="nucleotide sequence ID" value="NC_011750.1"/>
</dbReference>
<dbReference type="RefSeq" id="YP_002410163.1">
    <property type="nucleotide sequence ID" value="NC_011750.1"/>
</dbReference>
<dbReference type="SMR" id="B7NQY7"/>
<dbReference type="STRING" id="585057.ECIAI39_4289"/>
<dbReference type="GeneID" id="93778428"/>
<dbReference type="KEGG" id="ect:ECIAI39_4289"/>
<dbReference type="PATRIC" id="fig|585057.6.peg.4434"/>
<dbReference type="HOGENOM" id="CLU_046737_4_2_6"/>
<dbReference type="Proteomes" id="UP000000749">
    <property type="component" value="Chromosome"/>
</dbReference>
<dbReference type="GO" id="GO:0005737">
    <property type="term" value="C:cytoplasm"/>
    <property type="evidence" value="ECO:0007669"/>
    <property type="project" value="UniProtKB-SubCell"/>
</dbReference>
<dbReference type="GO" id="GO:0050821">
    <property type="term" value="P:protein stabilization"/>
    <property type="evidence" value="ECO:0007669"/>
    <property type="project" value="UniProtKB-UniRule"/>
</dbReference>
<dbReference type="CDD" id="cd06470">
    <property type="entry name" value="ACD_IbpA-B_like"/>
    <property type="match status" value="1"/>
</dbReference>
<dbReference type="FunFam" id="2.60.40.790:FF:000002">
    <property type="entry name" value="Small heat shock protein IbpA"/>
    <property type="match status" value="1"/>
</dbReference>
<dbReference type="Gene3D" id="2.60.40.790">
    <property type="match status" value="1"/>
</dbReference>
<dbReference type="HAMAP" id="MF_02000">
    <property type="entry name" value="HSP20_IbpA"/>
    <property type="match status" value="1"/>
</dbReference>
<dbReference type="InterPro" id="IPR002068">
    <property type="entry name" value="A-crystallin/Hsp20_dom"/>
</dbReference>
<dbReference type="InterPro" id="IPR037913">
    <property type="entry name" value="ACD_IbpA/B"/>
</dbReference>
<dbReference type="InterPro" id="IPR008978">
    <property type="entry name" value="HSP20-like_chaperone"/>
</dbReference>
<dbReference type="InterPro" id="IPR023728">
    <property type="entry name" value="HSP20_IbpA"/>
</dbReference>
<dbReference type="NCBIfam" id="NF008013">
    <property type="entry name" value="PRK10743.1"/>
    <property type="match status" value="1"/>
</dbReference>
<dbReference type="PANTHER" id="PTHR47062">
    <property type="match status" value="1"/>
</dbReference>
<dbReference type="PANTHER" id="PTHR47062:SF1">
    <property type="entry name" value="SMALL HEAT SHOCK PROTEIN IBPA"/>
    <property type="match status" value="1"/>
</dbReference>
<dbReference type="Pfam" id="PF00011">
    <property type="entry name" value="HSP20"/>
    <property type="match status" value="1"/>
</dbReference>
<dbReference type="SUPFAM" id="SSF49764">
    <property type="entry name" value="HSP20-like chaperones"/>
    <property type="match status" value="1"/>
</dbReference>
<dbReference type="PROSITE" id="PS01031">
    <property type="entry name" value="SHSP"/>
    <property type="match status" value="1"/>
</dbReference>
<name>IBPA_ECO7I</name>
<comment type="function">
    <text evidence="1">Associates with aggregated proteins, together with IbpB, to stabilize and protect them from irreversible denaturation and extensive proteolysis during heat shock and oxidative stress. Aggregated proteins bound to the IbpAB complex are more efficiently refolded and reactivated by the ATP-dependent chaperone systems ClpB and DnaK/DnaJ/GrpE. Its activity is ATP-independent.</text>
</comment>
<comment type="subunit">
    <text evidence="1">Monomer. Forms homomultimers of about 100-150 subunits at optimal growth temperatures. Conformation changes to monomers at high temperatures or high ionic concentrations.</text>
</comment>
<comment type="subcellular location">
    <subcellularLocation>
        <location evidence="1">Cytoplasm</location>
    </subcellularLocation>
</comment>
<comment type="similarity">
    <text evidence="1 2">Belongs to the small heat shock protein (HSP20) family.</text>
</comment>
<keyword id="KW-0143">Chaperone</keyword>
<keyword id="KW-0963">Cytoplasm</keyword>
<keyword id="KW-0346">Stress response</keyword>
<sequence length="137" mass="15774">MRNFDLSPLYRSAIGFDRLFNHLENNQSQSNGGYPPYNVELVDENHYRIAIAVAGFAESELEITAQDNLLVVKGAHADEQKERTYLYQGIAERNFERKFQLAENIHVRGANLVNGLLYIDLERVIPEAKKPRRIEIN</sequence>
<protein>
    <recommendedName>
        <fullName evidence="1">Small heat shock protein IbpA</fullName>
    </recommendedName>
    <alternativeName>
        <fullName evidence="1">16 kDa heat shock protein A</fullName>
    </alternativeName>
</protein>
<evidence type="ECO:0000255" key="1">
    <source>
        <dbReference type="HAMAP-Rule" id="MF_02000"/>
    </source>
</evidence>
<evidence type="ECO:0000255" key="2">
    <source>
        <dbReference type="PROSITE-ProRule" id="PRU00285"/>
    </source>
</evidence>
<organism>
    <name type="scientific">Escherichia coli O7:K1 (strain IAI39 / ExPEC)</name>
    <dbReference type="NCBI Taxonomy" id="585057"/>
    <lineage>
        <taxon>Bacteria</taxon>
        <taxon>Pseudomonadati</taxon>
        <taxon>Pseudomonadota</taxon>
        <taxon>Gammaproteobacteria</taxon>
        <taxon>Enterobacterales</taxon>
        <taxon>Enterobacteriaceae</taxon>
        <taxon>Escherichia</taxon>
    </lineage>
</organism>
<proteinExistence type="inferred from homology"/>
<gene>
    <name evidence="1" type="primary">ibpA</name>
    <name type="ordered locus">ECIAI39_4289</name>
</gene>
<feature type="chain" id="PRO_1000189080" description="Small heat shock protein IbpA">
    <location>
        <begin position="1"/>
        <end position="137"/>
    </location>
</feature>
<feature type="domain" description="sHSP" evidence="2">
    <location>
        <begin position="28"/>
        <end position="137"/>
    </location>
</feature>